<comment type="function">
    <text evidence="3 4 6 7 8 10 17">Found in functional membrane microdomains (FMM) that may be equivalent to eukaryotic membrane rafts. FMMs are highly dynamic and increase in number as cells age. FloA and FloT function is partially redundant; double deletions have marked synthetic phenotypes (PubMed:20713508, PubMed:22753055, PubMed:25909364, PubMed:27362352). Flotillins are thought to be important factors in membrane fluidity, especially during periods of rapid growth in rich media (Probable). Whether specific proteins are associated with FMMs is controversial; in one study FloT rafts have been shown to include proteins involved in adaptation to stationary phase, while FloA-FloT rafts include proteins involved in differentiation including sporulation, biofilm formation and DNA uptake competence (PubMed:25909364). Another (more finely resolved) study only showed association of NfeD2 with FloT rafts of all the proteins examined (PubMed:27362352). Involved in spatial organization of membranes, perhaps recruiting proteins to specific membrane regions (PubMed:23651456). Simultaneous overexpression of both FloA and FloT leads to defects in cell division and differentiation, in part caused by stabilization of FtsH and its subsequent increased ability to degrade proteins. Cells make more biofilm, are about half as long, have less EzrA and more frequent Z-rings (PubMed:24222488).</text>
</comment>
<comment type="subunit">
    <text evidence="6 8 9 15">Homooligomerizes (PubMed:25909364). Interacts with FloT (PubMed:23651456, PubMed:25909364, PubMed:26297017). Interacts with FtsH midcell (Probable). Interacts with PhoR, colocalizes with PhoR in FloA-only membrane rafts (PubMed:25909364).</text>
</comment>
<comment type="subcellular location">
    <subcellularLocation>
        <location evidence="1 5 6 8 10 13 14">Cell membrane</location>
        <topology evidence="1">Multi-pass membrane protein</topology>
    </subcellularLocation>
    <subcellularLocation>
        <location evidence="1 5 8 10 16">Membrane raft</location>
        <topology evidence="1">Multi-pass membrane protein</topology>
    </subcellularLocation>
    <text evidence="3 4 5 6 8 10">Present in detergent-resistant membrane (DRM) fractions, approximately 6 dynamic foci per cell; sometimes colocalizes with FloT in DRMs (PubMed:20713508, PubMed:22882210, PubMed:23651456). Found in discrete, highly mobile foci, rarely colocalizes with FloT (PubMed:22753055). At the septa colocalizes with FloT and FtsH (PubMed:22882210). Careful analysis gives an average of 13 FloA and 6 FloT foci per cell; FloA foci are smaller that FloT foci (PubMed:25909364). Another study shows FloA and FloT foci are similar in size, forming membrane assemblies of 85-110 nm, but FloA are more mobile than FloT foci. This study found no evidence of colocalization of FloA with FloT (PubMed:27362352).</text>
</comment>
<comment type="induction">
    <text evidence="4 8">Few foci are seen on rich media, when cells are grown in minimal medium more foci are seen (at protein level) (PubMed:22753055). Constitutively expressed in rich and sporulation/biofilm-inducing media, not controlled by spo0A (at protein level) (PubMed:25909364).</text>
</comment>
<comment type="domain">
    <text evidence="4 8 10">The last 95 residues are required for correct localization (PubMed:22753055). The C-terminus determines the oligomerization state of the protein; there are many small foci for FloA. Swapping with the C-terminus of FloT leads to fewer large foci (PubMed:25909364). N-terminally tagged, purified protein lacking the first 10 residues oligomerizes, with 12mer to about 50mer complexes found (PubMed:27362352).</text>
</comment>
<comment type="disruption phenotype">
    <text evidence="3 4 5 6 9 11">No effect on KinC activity, a double floT-floA deletion decreases the number of proteins in the DRM, blocks the ability of KinC to stimulate biofilm formation (PubMed:20713508). Single floA deletion has no change in FloT localization. Double floA-floT mutants have marked defects in cell morphology, motility, and transformation efficiency (PubMed:22753055). Single floA deletion sporulates less well. Double floA-floT deletion makes no biofilm, has greatly reduced FtsH, sporulates less than either single mutant (PubMed:22882210). Single mutation has a decrease in membrane fluidity, 25% decrease in protein secretion, double floT-floA deletion a stronger decrease in membrane fluidity and 35% decrease in protein secretion (PubMed:23651456). Double floA-floT deletion has reduced oligomerization of KinC (PubMed:26297017). Double floA-floT deletion cells are somewhat elongated, the site of cell wall synthesis is affected, increasing at division septa. The speed of MreB movement around the cell is significantly decreased in rich medium (PubMed:32662773).</text>
</comment>
<comment type="similarity">
    <text evidence="1">Belongs to the flotillin-like FloA family.</text>
</comment>
<accession>P54466</accession>
<dbReference type="EMBL" id="D84432">
    <property type="protein sequence ID" value="BAA12473.1"/>
    <property type="molecule type" value="Genomic_DNA"/>
</dbReference>
<dbReference type="EMBL" id="AL009126">
    <property type="protein sequence ID" value="CAB14480.1"/>
    <property type="molecule type" value="Genomic_DNA"/>
</dbReference>
<dbReference type="PIR" id="A69953">
    <property type="entry name" value="A69953"/>
</dbReference>
<dbReference type="RefSeq" id="NP_390416.1">
    <property type="nucleotide sequence ID" value="NC_000964.3"/>
</dbReference>
<dbReference type="RefSeq" id="WP_003230026.1">
    <property type="nucleotide sequence ID" value="NZ_OZ025638.1"/>
</dbReference>
<dbReference type="SMR" id="P54466"/>
<dbReference type="FunCoup" id="P54466">
    <property type="interactions" value="5"/>
</dbReference>
<dbReference type="STRING" id="224308.BSU25380"/>
<dbReference type="jPOST" id="P54466"/>
<dbReference type="PaxDb" id="224308-BSU25380"/>
<dbReference type="EnsemblBacteria" id="CAB14480">
    <property type="protein sequence ID" value="CAB14480"/>
    <property type="gene ID" value="BSU_25380"/>
</dbReference>
<dbReference type="GeneID" id="937865"/>
<dbReference type="KEGG" id="bsu:BSU25380"/>
<dbReference type="PATRIC" id="fig|224308.179.peg.2759"/>
<dbReference type="eggNOG" id="COG4864">
    <property type="taxonomic scope" value="Bacteria"/>
</dbReference>
<dbReference type="InParanoid" id="P54466"/>
<dbReference type="OrthoDB" id="9808365at2"/>
<dbReference type="PhylomeDB" id="P54466"/>
<dbReference type="BioCyc" id="BSUB:BSU25380-MONOMER"/>
<dbReference type="Proteomes" id="UP000001570">
    <property type="component" value="Chromosome"/>
</dbReference>
<dbReference type="GO" id="GO:0045121">
    <property type="term" value="C:membrane raft"/>
    <property type="evidence" value="ECO:0007669"/>
    <property type="project" value="UniProtKB-SubCell"/>
</dbReference>
<dbReference type="GO" id="GO:0005886">
    <property type="term" value="C:plasma membrane"/>
    <property type="evidence" value="ECO:0007669"/>
    <property type="project" value="UniProtKB-SubCell"/>
</dbReference>
<dbReference type="HAMAP" id="MF_01562">
    <property type="entry name" value="FloA"/>
    <property type="match status" value="1"/>
</dbReference>
<dbReference type="InterPro" id="IPR022853">
    <property type="entry name" value="FloA"/>
</dbReference>
<dbReference type="NCBIfam" id="NF010186">
    <property type="entry name" value="PRK13665.1"/>
    <property type="match status" value="1"/>
</dbReference>
<dbReference type="Pfam" id="PF12127">
    <property type="entry name" value="FloA"/>
    <property type="match status" value="1"/>
</dbReference>
<gene>
    <name evidence="1 12" type="primary">floA</name>
    <name type="synonym">yqfA</name>
    <name type="ordered locus">BSU25380</name>
</gene>
<feature type="chain" id="PRO_0000049793" description="Flotillin-like protein FloA">
    <location>
        <begin position="1"/>
        <end position="331"/>
    </location>
</feature>
<feature type="transmembrane region" description="Helical" evidence="1">
    <location>
        <begin position="6"/>
        <end position="26"/>
    </location>
</feature>
<feature type="transmembrane region" description="Helical" evidence="1">
    <location>
        <begin position="28"/>
        <end position="48"/>
    </location>
</feature>
<feature type="region of interest" description="Required for correct localization" evidence="4">
    <location>
        <begin position="236"/>
        <end position="331"/>
    </location>
</feature>
<feature type="region of interest" description="Disordered" evidence="2">
    <location>
        <begin position="312"/>
        <end position="331"/>
    </location>
</feature>
<feature type="short sequence motif" description="EA repeat 1" evidence="8">
    <location>
        <begin position="240"/>
        <end position="242"/>
    </location>
</feature>
<feature type="short sequence motif" description="EA repeat 2" evidence="8">
    <location>
        <begin position="251"/>
        <end position="253"/>
    </location>
</feature>
<feature type="short sequence motif" description="EA repeat 3" evidence="8">
    <location>
        <begin position="278"/>
        <end position="282"/>
    </location>
</feature>
<feature type="short sequence motif" description="EA repeat 4" evidence="8">
    <location>
        <begin position="288"/>
        <end position="290"/>
    </location>
</feature>
<feature type="mutagenesis site" description="No longer homooligomerizes, poor aggregation, severe decrease in the number of foci." evidence="8">
    <original>AEA</original>
    <variation>GLG</variation>
    <location>
        <begin position="240"/>
        <end position="242"/>
    </location>
</feature>
<feature type="mutagenesis site" description="No longer homooligomerizes, poor aggregation, severe decrease in the number of foci." evidence="8">
    <original>AEE</original>
    <variation>GLL</variation>
    <location>
        <begin position="251"/>
        <end position="253"/>
    </location>
</feature>
<feature type="mutagenesis site" description="Homooligomerizes, no change in number of foci." evidence="8">
    <original>EAEAE</original>
    <variation>LGLGL</variation>
    <location>
        <begin position="278"/>
        <end position="282"/>
    </location>
</feature>
<feature type="mutagenesis site" description="No longer homooligomerizes, poor aggregation, severe decrease in the number of foci. Protein is dispersed in the cell membrane." evidence="8">
    <original>AEA</original>
    <variation>GLG</variation>
    <location>
        <begin position="288"/>
        <end position="290"/>
    </location>
</feature>
<sequence length="331" mass="35641">MDPSTLMILAIVAVAIIVLAVFFTFVPVMLWISALAAGVKISIFTLVGMRLRRVIPNRVVNPLIKAHKAGLNVGTNQLESHYLAGGNVDRVVNALIAAQRANIELTFERCAAIDLAGRDVLEAVQMSVNPKVIETPFIAGVAMDGIEVKAKARITVRANIERLVGGAGEETIVARVGEGIVSTIGSSDNHKKVLENPDMISQTVLGKGLDSGTAFEILSIDIADVDIGKNIGAILQTDQAEADKNIAQAKAEERRAMAVAQEQEMRARVEEMRAKVVEAEAEVPLAMAEALREGNIGVMDYMNIKNIDADTEMRDSFGKLTKDPSDEDRKS</sequence>
<organism>
    <name type="scientific">Bacillus subtilis (strain 168)</name>
    <dbReference type="NCBI Taxonomy" id="224308"/>
    <lineage>
        <taxon>Bacteria</taxon>
        <taxon>Bacillati</taxon>
        <taxon>Bacillota</taxon>
        <taxon>Bacilli</taxon>
        <taxon>Bacillales</taxon>
        <taxon>Bacillaceae</taxon>
        <taxon>Bacillus</taxon>
    </lineage>
</organism>
<reference key="1">
    <citation type="journal article" date="1996" name="Microbiology">
        <title>Systematic sequencing of the 283 kb 210 degrees-232 degrees region of the Bacillus subtilis genome containing the skin element and many sporulation genes.</title>
        <authorList>
            <person name="Mizuno M."/>
            <person name="Masuda S."/>
            <person name="Takemaru K."/>
            <person name="Hosono S."/>
            <person name="Sato T."/>
            <person name="Takeuchi M."/>
            <person name="Kobayashi Y."/>
        </authorList>
    </citation>
    <scope>NUCLEOTIDE SEQUENCE [GENOMIC DNA]</scope>
    <source>
        <strain>168 / JH642</strain>
    </source>
</reference>
<reference key="2">
    <citation type="journal article" date="1997" name="Nature">
        <title>The complete genome sequence of the Gram-positive bacterium Bacillus subtilis.</title>
        <authorList>
            <person name="Kunst F."/>
            <person name="Ogasawara N."/>
            <person name="Moszer I."/>
            <person name="Albertini A.M."/>
            <person name="Alloni G."/>
            <person name="Azevedo V."/>
            <person name="Bertero M.G."/>
            <person name="Bessieres P."/>
            <person name="Bolotin A."/>
            <person name="Borchert S."/>
            <person name="Borriss R."/>
            <person name="Boursier L."/>
            <person name="Brans A."/>
            <person name="Braun M."/>
            <person name="Brignell S.C."/>
            <person name="Bron S."/>
            <person name="Brouillet S."/>
            <person name="Bruschi C.V."/>
            <person name="Caldwell B."/>
            <person name="Capuano V."/>
            <person name="Carter N.M."/>
            <person name="Choi S.-K."/>
            <person name="Codani J.-J."/>
            <person name="Connerton I.F."/>
            <person name="Cummings N.J."/>
            <person name="Daniel R.A."/>
            <person name="Denizot F."/>
            <person name="Devine K.M."/>
            <person name="Duesterhoeft A."/>
            <person name="Ehrlich S.D."/>
            <person name="Emmerson P.T."/>
            <person name="Entian K.-D."/>
            <person name="Errington J."/>
            <person name="Fabret C."/>
            <person name="Ferrari E."/>
            <person name="Foulger D."/>
            <person name="Fritz C."/>
            <person name="Fujita M."/>
            <person name="Fujita Y."/>
            <person name="Fuma S."/>
            <person name="Galizzi A."/>
            <person name="Galleron N."/>
            <person name="Ghim S.-Y."/>
            <person name="Glaser P."/>
            <person name="Goffeau A."/>
            <person name="Golightly E.J."/>
            <person name="Grandi G."/>
            <person name="Guiseppi G."/>
            <person name="Guy B.J."/>
            <person name="Haga K."/>
            <person name="Haiech J."/>
            <person name="Harwood C.R."/>
            <person name="Henaut A."/>
            <person name="Hilbert H."/>
            <person name="Holsappel S."/>
            <person name="Hosono S."/>
            <person name="Hullo M.-F."/>
            <person name="Itaya M."/>
            <person name="Jones L.-M."/>
            <person name="Joris B."/>
            <person name="Karamata D."/>
            <person name="Kasahara Y."/>
            <person name="Klaerr-Blanchard M."/>
            <person name="Klein C."/>
            <person name="Kobayashi Y."/>
            <person name="Koetter P."/>
            <person name="Koningstein G."/>
            <person name="Krogh S."/>
            <person name="Kumano M."/>
            <person name="Kurita K."/>
            <person name="Lapidus A."/>
            <person name="Lardinois S."/>
            <person name="Lauber J."/>
            <person name="Lazarevic V."/>
            <person name="Lee S.-M."/>
            <person name="Levine A."/>
            <person name="Liu H."/>
            <person name="Masuda S."/>
            <person name="Mauel C."/>
            <person name="Medigue C."/>
            <person name="Medina N."/>
            <person name="Mellado R.P."/>
            <person name="Mizuno M."/>
            <person name="Moestl D."/>
            <person name="Nakai S."/>
            <person name="Noback M."/>
            <person name="Noone D."/>
            <person name="O'Reilly M."/>
            <person name="Ogawa K."/>
            <person name="Ogiwara A."/>
            <person name="Oudega B."/>
            <person name="Park S.-H."/>
            <person name="Parro V."/>
            <person name="Pohl T.M."/>
            <person name="Portetelle D."/>
            <person name="Porwollik S."/>
            <person name="Prescott A.M."/>
            <person name="Presecan E."/>
            <person name="Pujic P."/>
            <person name="Purnelle B."/>
            <person name="Rapoport G."/>
            <person name="Rey M."/>
            <person name="Reynolds S."/>
            <person name="Rieger M."/>
            <person name="Rivolta C."/>
            <person name="Rocha E."/>
            <person name="Roche B."/>
            <person name="Rose M."/>
            <person name="Sadaie Y."/>
            <person name="Sato T."/>
            <person name="Scanlan E."/>
            <person name="Schleich S."/>
            <person name="Schroeter R."/>
            <person name="Scoffone F."/>
            <person name="Sekiguchi J."/>
            <person name="Sekowska A."/>
            <person name="Seror S.J."/>
            <person name="Serror P."/>
            <person name="Shin B.-S."/>
            <person name="Soldo B."/>
            <person name="Sorokin A."/>
            <person name="Tacconi E."/>
            <person name="Takagi T."/>
            <person name="Takahashi H."/>
            <person name="Takemaru K."/>
            <person name="Takeuchi M."/>
            <person name="Tamakoshi A."/>
            <person name="Tanaka T."/>
            <person name="Terpstra P."/>
            <person name="Tognoni A."/>
            <person name="Tosato V."/>
            <person name="Uchiyama S."/>
            <person name="Vandenbol M."/>
            <person name="Vannier F."/>
            <person name="Vassarotti A."/>
            <person name="Viari A."/>
            <person name="Wambutt R."/>
            <person name="Wedler E."/>
            <person name="Wedler H."/>
            <person name="Weitzenegger T."/>
            <person name="Winters P."/>
            <person name="Wipat A."/>
            <person name="Yamamoto H."/>
            <person name="Yamane K."/>
            <person name="Yasumoto K."/>
            <person name="Yata K."/>
            <person name="Yoshida K."/>
            <person name="Yoshikawa H.-F."/>
            <person name="Zumstein E."/>
            <person name="Yoshikawa H."/>
            <person name="Danchin A."/>
        </authorList>
    </citation>
    <scope>NUCLEOTIDE SEQUENCE [LARGE SCALE GENOMIC DNA]</scope>
    <source>
        <strain>168</strain>
    </source>
</reference>
<reference key="3">
    <citation type="journal article" date="2010" name="Genes Dev.">
        <title>Functional microdomains in bacterial membranes.</title>
        <authorList>
            <person name="Lopez D."/>
            <person name="Kolter R."/>
        </authorList>
    </citation>
    <scope>FUNCTION</scope>
    <scope>SUBCELLULAR LOCATION</scope>
    <scope>DISRUPTION PHENOTYPE</scope>
    <source>
        <strain>168 / Marburg / ATCC 6051 / DSM 10 / JCM 1465 / NBRC 13719 / NCIMB 3610 / NRRL NRS-744 / VKM B-501</strain>
    </source>
</reference>
<reference key="4">
    <citation type="journal article" date="2012" name="J. Bacteriol.">
        <title>Synthetic motility and cell shape defects associated with deletions of flotillin/reggie paralogs in Bacillus subtilis and interplay of these proteins with NfeD proteins.</title>
        <authorList>
            <person name="Dempwolff F."/>
            <person name="Moeller H.M."/>
            <person name="Graumann P.L."/>
        </authorList>
    </citation>
    <scope>FUNCTION</scope>
    <scope>SUBCELLULAR LOCATION</scope>
    <scope>INDUCTION</scope>
    <scope>DOMAIN</scope>
    <scope>DISRUPTION PHENOTYPE</scope>
    <source>
        <strain>168 / PY79</strain>
    </source>
</reference>
<reference key="5">
    <citation type="journal article" date="2012" name="Mol. Microbiol.">
        <title>The biofilm formation defect of a Bacillus subtilis flotillin-defective mutant involves the protease FtsH.</title>
        <authorList>
            <person name="Yepes A."/>
            <person name="Schneider J."/>
            <person name="Mielich B."/>
            <person name="Koch G."/>
            <person name="Garcia-Betancur J.C."/>
            <person name="Ramamurthi K.S."/>
            <person name="Vlamakis H."/>
            <person name="Lopez D."/>
        </authorList>
    </citation>
    <scope>INTERACTION WITH FTSH</scope>
    <scope>SUBCELLULAR LOCATION</scope>
    <scope>DISRUPTION PHENOTYPE</scope>
    <source>
        <strain>168 / Marburg / ATCC 6051 / DSM 10 / JCM 1465 / NBRC 13719 / NCIMB 3610 / NRRL NRS-744 / VKM B-501</strain>
    </source>
</reference>
<reference key="6">
    <citation type="journal article" date="2013" name="Mol. Microbiol.">
        <title>Flotillins functionally organize the bacterial membrane.</title>
        <authorList>
            <person name="Bach J.N."/>
            <person name="Bramkamp M."/>
        </authorList>
    </citation>
    <scope>FUNCTION</scope>
    <scope>INTERACTION WITH FLOT</scope>
    <scope>SUBCELLULAR LOCATION</scope>
    <scope>DISRUPTION PHENOTYPE</scope>
    <source>
        <strain>168</strain>
    </source>
</reference>
<reference key="7">
    <citation type="journal article" date="2013" name="MBio">
        <title>Overproduction of flotillin influences cell differentiation and shape in Bacillus subtilis.</title>
        <authorList>
            <person name="Mielich-Suess B."/>
            <person name="Schneider J."/>
            <person name="Lopez D."/>
        </authorList>
    </citation>
    <scope>FUNCTION IN CELL DIVISION</scope>
    <scope>FUNCTION IN DIFFERENTIATION</scope>
    <source>
        <strain>168 / PY79</strain>
    </source>
</reference>
<reference key="8">
    <citation type="journal article" date="2015" name="PLoS Genet.">
        <title>Spatio-temporal remodeling of functional membrane microdomains organizes the signaling networks of a bacterium.</title>
        <authorList>
            <person name="Schneider J."/>
            <person name="Klein T."/>
            <person name="Mielich-Suess B."/>
            <person name="Koch G."/>
            <person name="Franke C."/>
            <person name="Kuipers O.P."/>
            <person name="Kovacs A.T."/>
            <person name="Sauer M."/>
            <person name="Lopez D."/>
        </authorList>
    </citation>
    <scope>FUNCTION</scope>
    <scope>SUBUNIT</scope>
    <scope>INTERACTION WITH PHOR</scope>
    <scope>SUBCELLULAR LOCATION</scope>
    <scope>INDUCTION</scope>
    <scope>DOMAIN</scope>
    <scope>MUTAGENESIS OF 240-ALA--ALA-242; 251-ALA--GLU-253; 278-GLU--GLU-282 AND 288-ALA--ALA-290</scope>
    <source>
        <strain>168 / Marburg / ATCC 6051 / DSM 10 / JCM 1465 / NBRC 13719 / NCIMB 3610 / NRRL NRS-744 / VKM B-501</strain>
    </source>
</reference>
<reference key="9">
    <citation type="journal article" date="2015" name="Microbiology">
        <title>In vivo characterization of the scaffold activity of flotillin on the membrane kinase KinC of Bacillus subtilis.</title>
        <authorList>
            <person name="Schneider J."/>
            <person name="Mielich-Suess B."/>
            <person name="Boehme R."/>
            <person name="Lopez D."/>
        </authorList>
    </citation>
    <scope>INTERACTION WITH FLOT</scope>
    <scope>DISRUPTION PHENOTYPE</scope>
    <source>
        <strain>168 / Marburg / ATCC 6051 / DSM 10 / JCM 1465 / NBRC 13719 / NCIMB 3610 / NRRL NRS-744 / VKM B-501</strain>
    </source>
</reference>
<reference key="10">
    <citation type="journal article" date="2016" name="PLoS Genet.">
        <title>Super Resolution Fluorescence Microscopy and Tracking of Bacterial Flotillin (Reggie) Paralogs Provide Evidence for Defined-Sized Protein Microdomains within the Bacterial Membrane but Absence of Clusters Containing Detergent-Resistant Proteins.</title>
        <authorList>
            <person name="Dempwolff F."/>
            <person name="Schmidt F.K."/>
            <person name="Hervas A.B."/>
            <person name="Stroh A."/>
            <person name="Roesch T.C."/>
            <person name="Riese C.N."/>
            <person name="Dersch S."/>
            <person name="Heimerl T."/>
            <person name="Lucena D."/>
            <person name="Huelsbusch N."/>
            <person name="Stuermer C.A."/>
            <person name="Takeshita N."/>
            <person name="Fischer R."/>
            <person name="Eckhardt B."/>
            <person name="Graumann P.L."/>
        </authorList>
    </citation>
    <scope>FUNCTION</scope>
    <scope>SUBCELLULAR LOCATION</scope>
    <scope>DOMAIN</scope>
    <source>
        <strain>168</strain>
        <strain>168 / PY79</strain>
    </source>
</reference>
<reference key="11">
    <citation type="journal article" date="2020" name="Elife">
        <title>Flotillin-mediated membrane fluidity controls peptidoglycan synthesis and MreB movement.</title>
        <authorList>
            <person name="Zielinska A."/>
            <person name="Savietto A."/>
            <person name="de Sousa Borges A."/>
            <person name="Martinez D."/>
            <person name="Berbon M."/>
            <person name="Roelofsen J.R."/>
            <person name="Hartman A.M."/>
            <person name="de Boer R."/>
            <person name="Van der Klei I.J."/>
            <person name="Hirsch A.K."/>
            <person name="Habenstein B."/>
            <person name="Bramkamp M."/>
            <person name="Scheffers D.J."/>
        </authorList>
    </citation>
    <scope>FUNCTION</scope>
    <scope>DISRUPTION PHENOTYPE</scope>
    <source>
        <strain>168</strain>
    </source>
</reference>
<proteinExistence type="evidence at protein level"/>
<name>FLOA_BACSU</name>
<keyword id="KW-1003">Cell membrane</keyword>
<keyword id="KW-0472">Membrane</keyword>
<keyword id="KW-1185">Reference proteome</keyword>
<keyword id="KW-0677">Repeat</keyword>
<keyword id="KW-0812">Transmembrane</keyword>
<keyword id="KW-1133">Transmembrane helix</keyword>
<evidence type="ECO:0000255" key="1">
    <source>
        <dbReference type="HAMAP-Rule" id="MF_01562"/>
    </source>
</evidence>
<evidence type="ECO:0000256" key="2">
    <source>
        <dbReference type="SAM" id="MobiDB-lite"/>
    </source>
</evidence>
<evidence type="ECO:0000269" key="3">
    <source>
    </source>
</evidence>
<evidence type="ECO:0000269" key="4">
    <source>
    </source>
</evidence>
<evidence type="ECO:0000269" key="5">
    <source>
    </source>
</evidence>
<evidence type="ECO:0000269" key="6">
    <source>
    </source>
</evidence>
<evidence type="ECO:0000269" key="7">
    <source>
    </source>
</evidence>
<evidence type="ECO:0000269" key="8">
    <source>
    </source>
</evidence>
<evidence type="ECO:0000269" key="9">
    <source>
    </source>
</evidence>
<evidence type="ECO:0000269" key="10">
    <source>
    </source>
</evidence>
<evidence type="ECO:0000269" key="11">
    <source>
    </source>
</evidence>
<evidence type="ECO:0000303" key="12">
    <source>
    </source>
</evidence>
<evidence type="ECO:0000305" key="13">
    <source>
    </source>
</evidence>
<evidence type="ECO:0000305" key="14">
    <source>
    </source>
</evidence>
<evidence type="ECO:0000305" key="15">
    <source>
    </source>
</evidence>
<evidence type="ECO:0000305" key="16">
    <source>
    </source>
</evidence>
<evidence type="ECO:0000305" key="17">
    <source>
    </source>
</evidence>
<protein>
    <recommendedName>
        <fullName evidence="1 12">Flotillin-like protein FloA</fullName>
    </recommendedName>
</protein>